<protein>
    <recommendedName>
        <fullName>Uncharacterized protein TP_0871</fullName>
    </recommendedName>
</protein>
<sequence length="53" mass="5998">MSAYRYANLTNTKYIPSVYAVMATAGCDDRKIKRKEKGKRHAAPLSLMGVHKR</sequence>
<dbReference type="EMBL" id="AE000520">
    <property type="protein sequence ID" value="AAC65846.1"/>
    <property type="molecule type" value="Genomic_DNA"/>
</dbReference>
<dbReference type="PIR" id="E71270">
    <property type="entry name" value="E71270"/>
</dbReference>
<dbReference type="STRING" id="243276.TP_0871"/>
<dbReference type="EnsemblBacteria" id="AAC65846">
    <property type="protein sequence ID" value="AAC65846"/>
    <property type="gene ID" value="TP_0871"/>
</dbReference>
<dbReference type="KEGG" id="tpa:TP_0871"/>
<dbReference type="KEGG" id="tpw:TPANIC_0871"/>
<dbReference type="HOGENOM" id="CLU_3067334_0_0_12"/>
<dbReference type="Proteomes" id="UP000000811">
    <property type="component" value="Chromosome"/>
</dbReference>
<dbReference type="PROSITE" id="PS51257">
    <property type="entry name" value="PROKAR_LIPOPROTEIN"/>
    <property type="match status" value="1"/>
</dbReference>
<feature type="chain" id="PRO_0000202343" description="Uncharacterized protein TP_0871">
    <location>
        <begin position="1"/>
        <end position="53"/>
    </location>
</feature>
<feature type="region of interest" description="Disordered" evidence="1">
    <location>
        <begin position="34"/>
        <end position="53"/>
    </location>
</feature>
<organism>
    <name type="scientific">Treponema pallidum (strain Nichols)</name>
    <dbReference type="NCBI Taxonomy" id="243276"/>
    <lineage>
        <taxon>Bacteria</taxon>
        <taxon>Pseudomonadati</taxon>
        <taxon>Spirochaetota</taxon>
        <taxon>Spirochaetia</taxon>
        <taxon>Spirochaetales</taxon>
        <taxon>Treponemataceae</taxon>
        <taxon>Treponema</taxon>
    </lineage>
</organism>
<name>Y871_TREPA</name>
<gene>
    <name type="ordered locus">TP_0871</name>
</gene>
<accession>O83841</accession>
<evidence type="ECO:0000256" key="1">
    <source>
        <dbReference type="SAM" id="MobiDB-lite"/>
    </source>
</evidence>
<keyword id="KW-1185">Reference proteome</keyword>
<proteinExistence type="predicted"/>
<reference key="1">
    <citation type="journal article" date="1998" name="Science">
        <title>Complete genome sequence of Treponema pallidum, the syphilis spirochete.</title>
        <authorList>
            <person name="Fraser C.M."/>
            <person name="Norris S.J."/>
            <person name="Weinstock G.M."/>
            <person name="White O."/>
            <person name="Sutton G.G."/>
            <person name="Dodson R.J."/>
            <person name="Gwinn M.L."/>
            <person name="Hickey E.K."/>
            <person name="Clayton R.A."/>
            <person name="Ketchum K.A."/>
            <person name="Sodergren E."/>
            <person name="Hardham J.M."/>
            <person name="McLeod M.P."/>
            <person name="Salzberg S.L."/>
            <person name="Peterson J.D."/>
            <person name="Khalak H.G."/>
            <person name="Richardson D.L."/>
            <person name="Howell J.K."/>
            <person name="Chidambaram M."/>
            <person name="Utterback T.R."/>
            <person name="McDonald L.A."/>
            <person name="Artiach P."/>
            <person name="Bowman C."/>
            <person name="Cotton M.D."/>
            <person name="Fujii C."/>
            <person name="Garland S.A."/>
            <person name="Hatch B."/>
            <person name="Horst K."/>
            <person name="Roberts K.M."/>
            <person name="Sandusky M."/>
            <person name="Weidman J.F."/>
            <person name="Smith H.O."/>
            <person name="Venter J.C."/>
        </authorList>
    </citation>
    <scope>NUCLEOTIDE SEQUENCE [LARGE SCALE GENOMIC DNA]</scope>
    <source>
        <strain>Nichols</strain>
    </source>
</reference>